<name>SSN3_GIBMO</name>
<proteinExistence type="evidence at protein level"/>
<reference key="1">
    <citation type="journal article" date="2006" name="Fungal Genet. Biol.">
        <title>Fck1, a C-type cyclin-dependent kinase, interacts with Fcc1 to regulate development and secondary metabolism in Fusarium verticillioides.</title>
        <authorList>
            <person name="Bluhm B.H."/>
            <person name="Woloshuk C.P."/>
        </authorList>
    </citation>
    <scope>NUCLEOTIDE SEQUENCE [GENOMIC DNA]</scope>
    <scope>FUNCTION</scope>
    <scope>INTERACTION WITH SSN8</scope>
</reference>
<accession>Q4FCZ5</accession>
<gene>
    <name type="primary">SSN3</name>
    <name type="synonym">CDK8</name>
    <name type="synonym">FCK1</name>
</gene>
<feature type="chain" id="PRO_0000312945" description="Serine/threonine-protein kinase SSN3">
    <location>
        <begin position="1"/>
        <end position="450"/>
    </location>
</feature>
<feature type="domain" description="Protein kinase" evidence="2">
    <location>
        <begin position="40"/>
        <end position="393"/>
    </location>
</feature>
<feature type="region of interest" description="Disordered" evidence="4">
    <location>
        <begin position="307"/>
        <end position="341"/>
    </location>
</feature>
<feature type="region of interest" description="Disordered" evidence="4">
    <location>
        <begin position="418"/>
        <end position="450"/>
    </location>
</feature>
<feature type="compositionally biased region" description="Basic residues" evidence="4">
    <location>
        <begin position="310"/>
        <end position="326"/>
    </location>
</feature>
<feature type="active site" description="Proton acceptor" evidence="2 3">
    <location>
        <position position="173"/>
    </location>
</feature>
<feature type="binding site" evidence="2">
    <location>
        <begin position="46"/>
        <end position="54"/>
    </location>
    <ligand>
        <name>ATP</name>
        <dbReference type="ChEBI" id="CHEBI:30616"/>
    </ligand>
</feature>
<feature type="binding site" evidence="2">
    <location>
        <position position="71"/>
    </location>
    <ligand>
        <name>ATP</name>
        <dbReference type="ChEBI" id="CHEBI:30616"/>
    </ligand>
</feature>
<organism>
    <name type="scientific">Gibberella moniliformis</name>
    <name type="common">Maize ear and stalk rot fungus</name>
    <name type="synonym">Fusarium verticillioides</name>
    <dbReference type="NCBI Taxonomy" id="117187"/>
    <lineage>
        <taxon>Eukaryota</taxon>
        <taxon>Fungi</taxon>
        <taxon>Dikarya</taxon>
        <taxon>Ascomycota</taxon>
        <taxon>Pezizomycotina</taxon>
        <taxon>Sordariomycetes</taxon>
        <taxon>Hypocreomycetidae</taxon>
        <taxon>Hypocreales</taxon>
        <taxon>Nectriaceae</taxon>
        <taxon>Fusarium</taxon>
        <taxon>Fusarium fujikuroi species complex</taxon>
    </lineage>
</organism>
<evidence type="ECO:0000250" key="1"/>
<evidence type="ECO:0000255" key="2">
    <source>
        <dbReference type="PROSITE-ProRule" id="PRU00159"/>
    </source>
</evidence>
<evidence type="ECO:0000255" key="3">
    <source>
        <dbReference type="PROSITE-ProRule" id="PRU10027"/>
    </source>
</evidence>
<evidence type="ECO:0000256" key="4">
    <source>
        <dbReference type="SAM" id="MobiDB-lite"/>
    </source>
</evidence>
<evidence type="ECO:0000269" key="5">
    <source>
    </source>
</evidence>
<evidence type="ECO:0000305" key="6"/>
<dbReference type="EC" id="2.7.11.22"/>
<dbReference type="EC" id="2.7.11.23"/>
<dbReference type="EMBL" id="DQ091181">
    <property type="protein sequence ID" value="AAY99646.1"/>
    <property type="molecule type" value="Genomic_DNA"/>
</dbReference>
<dbReference type="SMR" id="Q4FCZ5"/>
<dbReference type="GO" id="GO:0016592">
    <property type="term" value="C:mediator complex"/>
    <property type="evidence" value="ECO:0007669"/>
    <property type="project" value="TreeGrafter"/>
</dbReference>
<dbReference type="GO" id="GO:0005524">
    <property type="term" value="F:ATP binding"/>
    <property type="evidence" value="ECO:0007669"/>
    <property type="project" value="UniProtKB-KW"/>
</dbReference>
<dbReference type="GO" id="GO:0004693">
    <property type="term" value="F:cyclin-dependent protein serine/threonine kinase activity"/>
    <property type="evidence" value="ECO:0007669"/>
    <property type="project" value="UniProtKB-EC"/>
</dbReference>
<dbReference type="GO" id="GO:0046872">
    <property type="term" value="F:metal ion binding"/>
    <property type="evidence" value="ECO:0007669"/>
    <property type="project" value="UniProtKB-KW"/>
</dbReference>
<dbReference type="GO" id="GO:0106310">
    <property type="term" value="F:protein serine kinase activity"/>
    <property type="evidence" value="ECO:0007669"/>
    <property type="project" value="RHEA"/>
</dbReference>
<dbReference type="GO" id="GO:0008353">
    <property type="term" value="F:RNA polymerase II CTD heptapeptide repeat kinase activity"/>
    <property type="evidence" value="ECO:0007669"/>
    <property type="project" value="UniProtKB-EC"/>
</dbReference>
<dbReference type="CDD" id="cd07842">
    <property type="entry name" value="STKc_CDK8_like"/>
    <property type="match status" value="1"/>
</dbReference>
<dbReference type="FunFam" id="3.30.200.20:FF:000426">
    <property type="entry name" value="Serine/threonine-protein kinase ssn3"/>
    <property type="match status" value="1"/>
</dbReference>
<dbReference type="Gene3D" id="3.30.200.20">
    <property type="entry name" value="Phosphorylase Kinase, domain 1"/>
    <property type="match status" value="1"/>
</dbReference>
<dbReference type="Gene3D" id="1.10.510.10">
    <property type="entry name" value="Transferase(Phosphotransferase) domain 1"/>
    <property type="match status" value="1"/>
</dbReference>
<dbReference type="InterPro" id="IPR050108">
    <property type="entry name" value="CDK"/>
</dbReference>
<dbReference type="InterPro" id="IPR011009">
    <property type="entry name" value="Kinase-like_dom_sf"/>
</dbReference>
<dbReference type="InterPro" id="IPR000719">
    <property type="entry name" value="Prot_kinase_dom"/>
</dbReference>
<dbReference type="InterPro" id="IPR008271">
    <property type="entry name" value="Ser/Thr_kinase_AS"/>
</dbReference>
<dbReference type="PANTHER" id="PTHR24056">
    <property type="entry name" value="CELL DIVISION PROTEIN KINASE"/>
    <property type="match status" value="1"/>
</dbReference>
<dbReference type="PANTHER" id="PTHR24056:SF495">
    <property type="entry name" value="CYCLIN-DEPENDENT KINASE 8-RELATED"/>
    <property type="match status" value="1"/>
</dbReference>
<dbReference type="Pfam" id="PF00069">
    <property type="entry name" value="Pkinase"/>
    <property type="match status" value="1"/>
</dbReference>
<dbReference type="SMART" id="SM00220">
    <property type="entry name" value="S_TKc"/>
    <property type="match status" value="1"/>
</dbReference>
<dbReference type="SUPFAM" id="SSF56112">
    <property type="entry name" value="Protein kinase-like (PK-like)"/>
    <property type="match status" value="1"/>
</dbReference>
<dbReference type="PROSITE" id="PS50011">
    <property type="entry name" value="PROTEIN_KINASE_DOM"/>
    <property type="match status" value="1"/>
</dbReference>
<dbReference type="PROSITE" id="PS00108">
    <property type="entry name" value="PROTEIN_KINASE_ST"/>
    <property type="match status" value="1"/>
</dbReference>
<sequence length="450" mass="50892">MPLRPHIGLGFPAHAYQKRHVEPHDRSTGYQPKVRITDRYRIIGFISSGTYGRVYKAVGRNGKPVGEFAIKKFKPDKEGEQISYTGISQSAIREMSLCSELHHINVIRLCEIVLEDKCIFMVFEYAEHDLLQIIHHHTQQPRHPIPPATIKSIMFQLLNGCQYLHINWVLHRDLKPANIMVTSSGEVKIGDLGLARRFDKPLHSLFSGDKVVVTIWYRAPELILGSYHYTPAIDMWAVGCIFAELLSLRPIFKGEEAKMDSKKTVPFRRNQMQKIIEIMGVPTKDKWPLLSTMPEYNQLNTLANSMASSHHNHHSHHHPHHHHGHYGSRNPPPPGGSNLEKWYYSTINHTSAPGGTPPLASLGSEGYKLLAGLLEYDPSKRLTAAQALQSPFFSTGDRVSANCFEGCKNEYPCRRVSQDDNDIRTSSLPGTKRSGLPDDSLIRPAKRQKE</sequence>
<protein>
    <recommendedName>
        <fullName>Serine/threonine-protein kinase SSN3</fullName>
        <ecNumber>2.7.11.22</ecNumber>
        <ecNumber>2.7.11.23</ecNumber>
    </recommendedName>
    <alternativeName>
        <fullName>Cyclin-dependent kinase 8</fullName>
    </alternativeName>
</protein>
<keyword id="KW-0010">Activator</keyword>
<keyword id="KW-0067">ATP-binding</keyword>
<keyword id="KW-0418">Kinase</keyword>
<keyword id="KW-0460">Magnesium</keyword>
<keyword id="KW-0479">Metal-binding</keyword>
<keyword id="KW-0547">Nucleotide-binding</keyword>
<keyword id="KW-0539">Nucleus</keyword>
<keyword id="KW-0678">Repressor</keyword>
<keyword id="KW-0723">Serine/threonine-protein kinase</keyword>
<keyword id="KW-0804">Transcription</keyword>
<keyword id="KW-0805">Transcription regulation</keyword>
<keyword id="KW-0808">Transferase</keyword>
<comment type="function">
    <text evidence="1 5">Component of the SRB8-11 complex. The SRB8-11 complex is a regulatory module of the Mediator complex which is itself involved in regulation of basal and activated RNA polymerase II-dependent transcription. The SRB8-11 complex may be involved in the transcriptional repression of a subset of genes regulated by Mediator. It may inhibit the association of the Mediator complex with RNA polymerase II to form the holoenzyme complex. The SRB8-11 complex phosphorylates the C-terminal domain (CTD) of the largest subunit of RNA polymerase II (By similarity). Required for normal growth and secondary metabolism.</text>
</comment>
<comment type="catalytic activity">
    <reaction>
        <text>L-seryl-[protein] + ATP = O-phospho-L-seryl-[protein] + ADP + H(+)</text>
        <dbReference type="Rhea" id="RHEA:17989"/>
        <dbReference type="Rhea" id="RHEA-COMP:9863"/>
        <dbReference type="Rhea" id="RHEA-COMP:11604"/>
        <dbReference type="ChEBI" id="CHEBI:15378"/>
        <dbReference type="ChEBI" id="CHEBI:29999"/>
        <dbReference type="ChEBI" id="CHEBI:30616"/>
        <dbReference type="ChEBI" id="CHEBI:83421"/>
        <dbReference type="ChEBI" id="CHEBI:456216"/>
        <dbReference type="EC" id="2.7.11.22"/>
    </reaction>
</comment>
<comment type="catalytic activity">
    <reaction>
        <text>L-threonyl-[protein] + ATP = O-phospho-L-threonyl-[protein] + ADP + H(+)</text>
        <dbReference type="Rhea" id="RHEA:46608"/>
        <dbReference type="Rhea" id="RHEA-COMP:11060"/>
        <dbReference type="Rhea" id="RHEA-COMP:11605"/>
        <dbReference type="ChEBI" id="CHEBI:15378"/>
        <dbReference type="ChEBI" id="CHEBI:30013"/>
        <dbReference type="ChEBI" id="CHEBI:30616"/>
        <dbReference type="ChEBI" id="CHEBI:61977"/>
        <dbReference type="ChEBI" id="CHEBI:456216"/>
        <dbReference type="EC" id="2.7.11.22"/>
    </reaction>
</comment>
<comment type="catalytic activity">
    <reaction>
        <text>[DNA-directed RNA polymerase] + ATP = phospho-[DNA-directed RNA polymerase] + ADP + H(+)</text>
        <dbReference type="Rhea" id="RHEA:10216"/>
        <dbReference type="Rhea" id="RHEA-COMP:11321"/>
        <dbReference type="Rhea" id="RHEA-COMP:11322"/>
        <dbReference type="ChEBI" id="CHEBI:15378"/>
        <dbReference type="ChEBI" id="CHEBI:30616"/>
        <dbReference type="ChEBI" id="CHEBI:43176"/>
        <dbReference type="ChEBI" id="CHEBI:68546"/>
        <dbReference type="ChEBI" id="CHEBI:456216"/>
        <dbReference type="EC" id="2.7.11.23"/>
    </reaction>
</comment>
<comment type="cofactor">
    <cofactor evidence="1">
        <name>Mg(2+)</name>
        <dbReference type="ChEBI" id="CHEBI:18420"/>
    </cofactor>
</comment>
<comment type="subunit">
    <text evidence="1 5">Component of the SRB8-11 complex, a regulatory module of the Mediator complex (By similarity). Interacts with SSN8/FCC1.</text>
</comment>
<comment type="subcellular location">
    <subcellularLocation>
        <location evidence="6">Nucleus</location>
    </subcellularLocation>
</comment>
<comment type="similarity">
    <text evidence="6">Belongs to the protein kinase superfamily. CMGC Ser/Thr protein kinase family. CDC2/CDKX subfamily.</text>
</comment>